<keyword id="KW-0002">3D-structure</keyword>
<keyword id="KW-0903">Direct protein sequencing</keyword>
<keyword id="KW-1185">Reference proteome</keyword>
<keyword id="KW-0687">Ribonucleoprotein</keyword>
<keyword id="KW-0689">Ribosomal protein</keyword>
<keyword id="KW-0694">RNA-binding</keyword>
<keyword id="KW-0699">rRNA-binding</keyword>
<name>RL18_DEIRA</name>
<comment type="function">
    <text>This is one of the proteins that bind and probably mediate the attachment of the 5S RNA into the large ribosomal subunit, where it forms part of the central protuberance.</text>
</comment>
<comment type="subunit">
    <text evidence="1 2 3 4 5 6 7">Part of the 50S ribosomal subunit; part of the 5S rRNA/L5/L18/L25 subcomplex. Contacts the 23S rRNA (By similarity). Contacts protein L27 and the 5S rRNA.</text>
</comment>
<comment type="similarity">
    <text evidence="8">Belongs to the universal ribosomal protein uL18 family.</text>
</comment>
<dbReference type="EMBL" id="AE000513">
    <property type="protein sequence ID" value="AAF11661.1"/>
    <property type="molecule type" value="Genomic_DNA"/>
</dbReference>
<dbReference type="PIR" id="C75314">
    <property type="entry name" value="C75314"/>
</dbReference>
<dbReference type="RefSeq" id="NP_295835.1">
    <property type="nucleotide sequence ID" value="NC_001263.1"/>
</dbReference>
<dbReference type="RefSeq" id="WP_010888743.1">
    <property type="nucleotide sequence ID" value="NC_001263.1"/>
</dbReference>
<dbReference type="PDB" id="1NKW">
    <property type="method" value="X-ray"/>
    <property type="resolution" value="3.10 A"/>
    <property type="chains" value="M=1-114"/>
</dbReference>
<dbReference type="PDB" id="1NWX">
    <property type="method" value="X-ray"/>
    <property type="resolution" value="3.50 A"/>
    <property type="chains" value="M=2-114"/>
</dbReference>
<dbReference type="PDB" id="1NWY">
    <property type="method" value="X-ray"/>
    <property type="resolution" value="3.30 A"/>
    <property type="chains" value="M=2-114"/>
</dbReference>
<dbReference type="PDB" id="1SM1">
    <property type="method" value="X-ray"/>
    <property type="resolution" value="3.42 A"/>
    <property type="chains" value="M=1-114"/>
</dbReference>
<dbReference type="PDB" id="1XBP">
    <property type="method" value="X-ray"/>
    <property type="resolution" value="3.50 A"/>
    <property type="chains" value="M=2-114"/>
</dbReference>
<dbReference type="PDB" id="2ZJP">
    <property type="method" value="X-ray"/>
    <property type="resolution" value="3.70 A"/>
    <property type="chains" value="L=1-114"/>
</dbReference>
<dbReference type="PDB" id="2ZJQ">
    <property type="method" value="X-ray"/>
    <property type="resolution" value="3.30 A"/>
    <property type="chains" value="L=1-114"/>
</dbReference>
<dbReference type="PDB" id="2ZJR">
    <property type="method" value="X-ray"/>
    <property type="resolution" value="2.91 A"/>
    <property type="chains" value="L=1-114"/>
</dbReference>
<dbReference type="PDB" id="3CF5">
    <property type="method" value="X-ray"/>
    <property type="resolution" value="3.30 A"/>
    <property type="chains" value="L=1-114"/>
</dbReference>
<dbReference type="PDB" id="3DLL">
    <property type="method" value="X-ray"/>
    <property type="resolution" value="3.50 A"/>
    <property type="chains" value="L=1-114"/>
</dbReference>
<dbReference type="PDB" id="3PIO">
    <property type="method" value="X-ray"/>
    <property type="resolution" value="3.25 A"/>
    <property type="chains" value="L=1-114"/>
</dbReference>
<dbReference type="PDB" id="3PIP">
    <property type="method" value="X-ray"/>
    <property type="resolution" value="3.45 A"/>
    <property type="chains" value="L=1-114"/>
</dbReference>
<dbReference type="PDB" id="4IO9">
    <property type="method" value="X-ray"/>
    <property type="resolution" value="3.20 A"/>
    <property type="chains" value="L=1-114"/>
</dbReference>
<dbReference type="PDB" id="4IOA">
    <property type="method" value="X-ray"/>
    <property type="resolution" value="3.20 A"/>
    <property type="chains" value="L=1-114"/>
</dbReference>
<dbReference type="PDB" id="4IOC">
    <property type="method" value="X-ray"/>
    <property type="resolution" value="3.60 A"/>
    <property type="chains" value="L=1-114"/>
</dbReference>
<dbReference type="PDB" id="4U67">
    <property type="method" value="X-ray"/>
    <property type="resolution" value="3.65 A"/>
    <property type="chains" value="L=1-114"/>
</dbReference>
<dbReference type="PDB" id="4V49">
    <property type="method" value="X-ray"/>
    <property type="resolution" value="8.70 A"/>
    <property type="chains" value="M=4-114"/>
</dbReference>
<dbReference type="PDB" id="4V4A">
    <property type="method" value="X-ray"/>
    <property type="resolution" value="9.50 A"/>
    <property type="chains" value="M=4-114"/>
</dbReference>
<dbReference type="PDB" id="4V4G">
    <property type="method" value="X-ray"/>
    <property type="resolution" value="11.50 A"/>
    <property type="chains" value="P=4-114"/>
</dbReference>
<dbReference type="PDB" id="4WFN">
    <property type="method" value="X-ray"/>
    <property type="resolution" value="3.54 A"/>
    <property type="chains" value="L=1-114"/>
</dbReference>
<dbReference type="PDB" id="5DM6">
    <property type="method" value="X-ray"/>
    <property type="resolution" value="2.90 A"/>
    <property type="chains" value="L=8-111"/>
</dbReference>
<dbReference type="PDB" id="5DM7">
    <property type="method" value="X-ray"/>
    <property type="resolution" value="3.00 A"/>
    <property type="chains" value="L=8-111"/>
</dbReference>
<dbReference type="PDB" id="5JVG">
    <property type="method" value="X-ray"/>
    <property type="resolution" value="3.43 A"/>
    <property type="chains" value="L=1-114"/>
</dbReference>
<dbReference type="PDB" id="5JVH">
    <property type="method" value="X-ray"/>
    <property type="resolution" value="3.58 A"/>
    <property type="chains" value="L=1-114"/>
</dbReference>
<dbReference type="PDB" id="7A0R">
    <property type="method" value="X-ray"/>
    <property type="resolution" value="3.30 A"/>
    <property type="chains" value="L=8-111"/>
</dbReference>
<dbReference type="PDB" id="7A0S">
    <property type="method" value="X-ray"/>
    <property type="resolution" value="3.22 A"/>
    <property type="chains" value="L=8-111"/>
</dbReference>
<dbReference type="PDB" id="7A18">
    <property type="method" value="X-ray"/>
    <property type="resolution" value="3.40 A"/>
    <property type="chains" value="L=8-111"/>
</dbReference>
<dbReference type="PDBsum" id="1NKW"/>
<dbReference type="PDBsum" id="1NWX"/>
<dbReference type="PDBsum" id="1NWY"/>
<dbReference type="PDBsum" id="1SM1"/>
<dbReference type="PDBsum" id="1XBP"/>
<dbReference type="PDBsum" id="2ZJP"/>
<dbReference type="PDBsum" id="2ZJQ"/>
<dbReference type="PDBsum" id="2ZJR"/>
<dbReference type="PDBsum" id="3CF5"/>
<dbReference type="PDBsum" id="3DLL"/>
<dbReference type="PDBsum" id="3PIO"/>
<dbReference type="PDBsum" id="3PIP"/>
<dbReference type="PDBsum" id="4IO9"/>
<dbReference type="PDBsum" id="4IOA"/>
<dbReference type="PDBsum" id="4IOC"/>
<dbReference type="PDBsum" id="4U67"/>
<dbReference type="PDBsum" id="4V49"/>
<dbReference type="PDBsum" id="4V4A"/>
<dbReference type="PDBsum" id="4V4G"/>
<dbReference type="PDBsum" id="4WFN"/>
<dbReference type="PDBsum" id="5DM6"/>
<dbReference type="PDBsum" id="5DM7"/>
<dbReference type="PDBsum" id="5JVG"/>
<dbReference type="PDBsum" id="5JVH"/>
<dbReference type="PDBsum" id="7A0R"/>
<dbReference type="PDBsum" id="7A0S"/>
<dbReference type="PDBsum" id="7A18"/>
<dbReference type="SMR" id="Q9RSL2"/>
<dbReference type="FunCoup" id="Q9RSL2">
    <property type="interactions" value="431"/>
</dbReference>
<dbReference type="IntAct" id="Q9RSL2">
    <property type="interactions" value="1"/>
</dbReference>
<dbReference type="STRING" id="243230.DR_2112"/>
<dbReference type="PaxDb" id="243230-DR_2112"/>
<dbReference type="EnsemblBacteria" id="AAF11661">
    <property type="protein sequence ID" value="AAF11661"/>
    <property type="gene ID" value="DR_2112"/>
</dbReference>
<dbReference type="GeneID" id="69518354"/>
<dbReference type="KEGG" id="dra:DR_2112"/>
<dbReference type="PATRIC" id="fig|243230.17.peg.2335"/>
<dbReference type="eggNOG" id="COG0256">
    <property type="taxonomic scope" value="Bacteria"/>
</dbReference>
<dbReference type="HOGENOM" id="CLU_098841_0_1_0"/>
<dbReference type="InParanoid" id="Q9RSL2"/>
<dbReference type="OrthoDB" id="9810939at2"/>
<dbReference type="EvolutionaryTrace" id="Q9RSL2"/>
<dbReference type="Proteomes" id="UP000002524">
    <property type="component" value="Chromosome 1"/>
</dbReference>
<dbReference type="GO" id="GO:0022625">
    <property type="term" value="C:cytosolic large ribosomal subunit"/>
    <property type="evidence" value="ECO:0000318"/>
    <property type="project" value="GO_Central"/>
</dbReference>
<dbReference type="GO" id="GO:0008097">
    <property type="term" value="F:5S rRNA binding"/>
    <property type="evidence" value="ECO:0000318"/>
    <property type="project" value="GO_Central"/>
</dbReference>
<dbReference type="GO" id="GO:0003735">
    <property type="term" value="F:structural constituent of ribosome"/>
    <property type="evidence" value="ECO:0007669"/>
    <property type="project" value="InterPro"/>
</dbReference>
<dbReference type="GO" id="GO:0006412">
    <property type="term" value="P:translation"/>
    <property type="evidence" value="ECO:0007669"/>
    <property type="project" value="UniProtKB-UniRule"/>
</dbReference>
<dbReference type="CDD" id="cd00432">
    <property type="entry name" value="Ribosomal_L18_L5e"/>
    <property type="match status" value="1"/>
</dbReference>
<dbReference type="FunFam" id="3.30.420.100:FF:000001">
    <property type="entry name" value="50S ribosomal protein L18"/>
    <property type="match status" value="1"/>
</dbReference>
<dbReference type="Gene3D" id="3.30.420.100">
    <property type="match status" value="1"/>
</dbReference>
<dbReference type="HAMAP" id="MF_01337_B">
    <property type="entry name" value="Ribosomal_uL18_B"/>
    <property type="match status" value="1"/>
</dbReference>
<dbReference type="InterPro" id="IPR004389">
    <property type="entry name" value="Ribosomal_uL18_bac-type"/>
</dbReference>
<dbReference type="InterPro" id="IPR005484">
    <property type="entry name" value="Ribosomal_uL18_bac/euk"/>
</dbReference>
<dbReference type="NCBIfam" id="TIGR00060">
    <property type="entry name" value="L18_bact"/>
    <property type="match status" value="1"/>
</dbReference>
<dbReference type="PANTHER" id="PTHR12899">
    <property type="entry name" value="39S RIBOSOMAL PROTEIN L18, MITOCHONDRIAL"/>
    <property type="match status" value="1"/>
</dbReference>
<dbReference type="PANTHER" id="PTHR12899:SF3">
    <property type="entry name" value="LARGE RIBOSOMAL SUBUNIT PROTEIN UL18M"/>
    <property type="match status" value="1"/>
</dbReference>
<dbReference type="Pfam" id="PF00861">
    <property type="entry name" value="Ribosomal_L18p"/>
    <property type="match status" value="1"/>
</dbReference>
<dbReference type="SUPFAM" id="SSF53137">
    <property type="entry name" value="Translational machinery components"/>
    <property type="match status" value="1"/>
</dbReference>
<proteinExistence type="evidence at protein level"/>
<organism>
    <name type="scientific">Deinococcus radiodurans (strain ATCC 13939 / DSM 20539 / JCM 16871 / CCUG 27074 / LMG 4051 / NBRC 15346 / NCIMB 9279 / VKM B-1422 / R1)</name>
    <dbReference type="NCBI Taxonomy" id="243230"/>
    <lineage>
        <taxon>Bacteria</taxon>
        <taxon>Thermotogati</taxon>
        <taxon>Deinococcota</taxon>
        <taxon>Deinococci</taxon>
        <taxon>Deinococcales</taxon>
        <taxon>Deinococcaceae</taxon>
        <taxon>Deinococcus</taxon>
    </lineage>
</organism>
<feature type="initiator methionine" description="Removed">
    <location>
        <position position="1"/>
    </location>
</feature>
<feature type="chain" id="PRO_0000131255" description="Large ribosomal subunit protein uL18">
    <location>
        <begin position="2"/>
        <end position="114"/>
    </location>
</feature>
<feature type="helix" evidence="11">
    <location>
        <begin position="10"/>
        <end position="18"/>
    </location>
</feature>
<feature type="turn" evidence="9">
    <location>
        <begin position="22"/>
        <end position="24"/>
    </location>
</feature>
<feature type="strand" evidence="9">
    <location>
        <begin position="26"/>
        <end position="29"/>
    </location>
</feature>
<feature type="strand" evidence="12">
    <location>
        <begin position="35"/>
        <end position="37"/>
    </location>
</feature>
<feature type="strand" evidence="11">
    <location>
        <begin position="42"/>
        <end position="44"/>
    </location>
</feature>
<feature type="turn" evidence="11">
    <location>
        <begin position="45"/>
        <end position="48"/>
    </location>
</feature>
<feature type="strand" evidence="12">
    <location>
        <begin position="50"/>
        <end position="53"/>
    </location>
</feature>
<feature type="strand" evidence="11">
    <location>
        <begin position="56"/>
        <end position="58"/>
    </location>
</feature>
<feature type="strand" evidence="9">
    <location>
        <begin position="64"/>
        <end position="67"/>
    </location>
</feature>
<feature type="helix" evidence="11">
    <location>
        <begin position="68"/>
        <end position="82"/>
    </location>
</feature>
<feature type="strand" evidence="10">
    <location>
        <begin position="87"/>
        <end position="89"/>
    </location>
</feature>
<feature type="strand" evidence="11">
    <location>
        <begin position="96"/>
        <end position="98"/>
    </location>
</feature>
<feature type="helix" evidence="11">
    <location>
        <begin position="99"/>
        <end position="109"/>
    </location>
</feature>
<gene>
    <name type="primary">rplR</name>
    <name type="ordered locus">DR_2112</name>
</gene>
<sequence length="114" mass="12139">MATATTIRRKLRTRRKVRTTTAASGRLRLSVYRSSKHIYAQIIDDSRGQTLAAASSAALKSGNKTDTAAAVGKALAAAAAEKGIKQVVFDRGSYKYHGRVKALADAAREGGLDF</sequence>
<reference key="1">
    <citation type="journal article" date="1999" name="Science">
        <title>Genome sequence of the radioresistant bacterium Deinococcus radiodurans R1.</title>
        <authorList>
            <person name="White O."/>
            <person name="Eisen J.A."/>
            <person name="Heidelberg J.F."/>
            <person name="Hickey E.K."/>
            <person name="Peterson J.D."/>
            <person name="Dodson R.J."/>
            <person name="Haft D.H."/>
            <person name="Gwinn M.L."/>
            <person name="Nelson W.C."/>
            <person name="Richardson D.L."/>
            <person name="Moffat K.S."/>
            <person name="Qin H."/>
            <person name="Jiang L."/>
            <person name="Pamphile W."/>
            <person name="Crosby M."/>
            <person name="Shen M."/>
            <person name="Vamathevan J.J."/>
            <person name="Lam P."/>
            <person name="McDonald L.A."/>
            <person name="Utterback T.R."/>
            <person name="Zalewski C."/>
            <person name="Makarova K.S."/>
            <person name="Aravind L."/>
            <person name="Daly M.J."/>
            <person name="Minton K.W."/>
            <person name="Fleischmann R.D."/>
            <person name="Ketchum K.A."/>
            <person name="Nelson K.E."/>
            <person name="Salzberg S.L."/>
            <person name="Smith H.O."/>
            <person name="Venter J.C."/>
            <person name="Fraser C.M."/>
        </authorList>
    </citation>
    <scope>NUCLEOTIDE SEQUENCE [LARGE SCALE GENOMIC DNA]</scope>
    <source>
        <strain>ATCC 13939 / DSM 20539 / JCM 16871 / CCUG 27074 / LMG 4051 / NBRC 15346 / NCIMB 9279 / VKM B-1422 / R1</strain>
    </source>
</reference>
<reference key="2">
    <citation type="journal article" date="2001" name="Cell">
        <title>High resolution structure of the large ribosomal subunit from a mesophilic eubacterium.</title>
        <authorList>
            <person name="Harms J."/>
            <person name="Schluenzen F."/>
            <person name="Zarivach R."/>
            <person name="Bashan A."/>
            <person name="Gat S."/>
            <person name="Agmon I."/>
            <person name="Bartels H."/>
            <person name="Franceschi F."/>
            <person name="Yonath A."/>
        </authorList>
    </citation>
    <scope>X-RAY CRYSTALLOGRAPHY (3.1 ANGSTROMS) OF THE 50S SUBUNIT</scope>
    <scope>PROTEIN SEQUENCE OF 1-6</scope>
    <source>
        <strain>ATCC 13939 / DSM 20539 / JCM 16871 / CCUG 27074 / LMG 4051 / NBRC 15346 / NCIMB 9279 / VKM B-1422 / R1</strain>
    </source>
</reference>
<reference key="3">
    <citation type="journal article" date="2001" name="Nature">
        <title>Structural basis for the interaction of antibiotics with the peptidyl transferase centre in eubacteria.</title>
        <authorList>
            <person name="Schluenzen F."/>
            <person name="Zarivach R."/>
            <person name="Harms J."/>
            <person name="Bashan A."/>
            <person name="Tocilj A."/>
            <person name="Albrecht R."/>
            <person name="Yonath A."/>
            <person name="Franceschi F."/>
        </authorList>
    </citation>
    <scope>X-RAY CRYSTALLOGRAPHY (3.1 ANGSTROMS) OF THE 50S SUBUNIT IN COMPLEX WITH FIVE ANTIBIOTICS</scope>
    <source>
        <strain>ATCC 13939 / DSM 20539 / JCM 16871 / CCUG 27074 / LMG 4051 / NBRC 15346 / NCIMB 9279 / VKM B-1422 / R1</strain>
    </source>
</reference>
<reference key="4">
    <citation type="journal article" date="2003" name="Mol. Cell">
        <title>Structural basis of the ribosomal machinery for peptide bond formation, translocation, and nascent chain progression.</title>
        <authorList>
            <person name="Bashan A."/>
            <person name="Agmon I."/>
            <person name="Zarivach R."/>
            <person name="Schluenzen F."/>
            <person name="Harms J."/>
            <person name="Berisio R."/>
            <person name="Bartels H."/>
            <person name="Franceschi F."/>
            <person name="Auerbach T."/>
            <person name="Hansen H.A."/>
            <person name="Kossoy E."/>
            <person name="Kessler M."/>
            <person name="Yonath A."/>
        </authorList>
    </citation>
    <scope>X-RAY CRYSTALLOGRAPHY (3.5 ANGSTROMS) OF THE 50S SUBUNIT IN COMPLEX WITH TRNA MIMICS</scope>
    <source>
        <strain>ATCC 13939 / DSM 20539 / JCM 16871 / CCUG 27074 / LMG 4051 / NBRC 15346 / NCIMB 9279 / VKM B-1422 / R1</strain>
    </source>
</reference>
<reference key="5">
    <citation type="journal article" date="2003" name="Structure">
        <title>Structural basis for the antibiotic activity of ketolides and azalides.</title>
        <authorList>
            <person name="Schluenzen F."/>
            <person name="Harms J.M."/>
            <person name="Franceschi F."/>
            <person name="Hansen H.A."/>
            <person name="Bartels H."/>
            <person name="Zarivach R."/>
            <person name="Yonath A."/>
        </authorList>
    </citation>
    <scope>X-RAY CRYSTALLOGRAPHY (3.3 ANGSTROMS) OF THE 50S SUBUNIT IN COMPLEX WITH MODIFIED MACROLIDE ANTIBIOTICS</scope>
    <source>
        <strain>ATCC 13939 / DSM 20539 / JCM 16871 / CCUG 27074 / LMG 4051 / NBRC 15346 / NCIMB 9279 / VKM B-1422 / R1</strain>
    </source>
</reference>
<reference key="6">
    <citation type="journal article" date="2003" name="Nat. Struct. Biol.">
        <title>Structural insight into the role of the ribosomal tunnel in cellular regulation.</title>
        <authorList>
            <person name="Berisio R."/>
            <person name="Schluenzen F."/>
            <person name="Harms J."/>
            <person name="Bashan A."/>
            <person name="Auerbach T."/>
            <person name="Baram D."/>
            <person name="Yonath A."/>
        </authorList>
    </citation>
    <scope>X-RAY CRYSTALLOGRAPHY (3.4 ANGSTROMS) OF THE 50S SUBUNIT IN COMPLEX WITH TROLEANDOMYCIN</scope>
    <source>
        <strain>ATCC 13939 / DSM 20539 / JCM 16871 / CCUG 27074 / LMG 4051 / NBRC 15346 / NCIMB 9279 / VKM B-1422 / R1</strain>
    </source>
</reference>
<reference key="7">
    <citation type="journal article" date="2004" name="BMC Biol.">
        <title>Alterations at the peptidyl transferase centre of the ribosome induced by the synergistic action of the streptogramins dalfopristin and quinupristin.</title>
        <authorList>
            <person name="Harms J.M."/>
            <person name="Schluenzen F."/>
            <person name="Fucini P."/>
            <person name="Bartels H."/>
            <person name="Yonath A."/>
        </authorList>
    </citation>
    <scope>X-RAY CRYSTALLOGRAPHY (3.4 ANGSTROMS) OF THE 50S SUBUNIT IN COMPLEX WITH THE STREPTOGRAMINS QUINUPRISTIN AND DALFOPRISTIN</scope>
    <source>
        <strain>ATCC 13939 / DSM 20539 / JCM 16871 / CCUG 27074 / LMG 4051 / NBRC 15346 / NCIMB 9279 / VKM B-1422 / R1</strain>
    </source>
</reference>
<reference key="8">
    <citation type="journal article" date="2004" name="Mol. Microbiol.">
        <title>Inhibition of peptide bond formation by pleuromutilins: the structure of the 50S ribosomal subunit from Deinococcus radiodurans in complex with tiamulin.</title>
        <authorList>
            <person name="Schluenzen F."/>
            <person name="Pyetan E."/>
            <person name="Fucini P."/>
            <person name="Yonath A."/>
            <person name="Harms J.M."/>
        </authorList>
    </citation>
    <scope>X-RAY CRYSTALLOGRAPHY (3.5 ANGSTROMS) OF THE 50S SUBUNIT IN COMPLEX WITH TIAMULIN</scope>
    <source>
        <strain>ATCC 13939 / DSM 20539 / JCM 16871 / CCUG 27074 / LMG 4051 / NBRC 15346 / NCIMB 9279 / VKM B-1422 / R1</strain>
    </source>
</reference>
<accession>Q9RSL2</accession>
<protein>
    <recommendedName>
        <fullName evidence="8">Large ribosomal subunit protein uL18</fullName>
    </recommendedName>
    <alternativeName>
        <fullName>50S ribosomal protein L18</fullName>
    </alternativeName>
</protein>
<evidence type="ECO:0000250" key="1"/>
<evidence type="ECO:0000269" key="2">
    <source>
    </source>
</evidence>
<evidence type="ECO:0000269" key="3">
    <source>
    </source>
</evidence>
<evidence type="ECO:0000269" key="4">
    <source>
    </source>
</evidence>
<evidence type="ECO:0000269" key="5">
    <source>
    </source>
</evidence>
<evidence type="ECO:0000269" key="6">
    <source>
    </source>
</evidence>
<evidence type="ECO:0000269" key="7">
    <source>
    </source>
</evidence>
<evidence type="ECO:0000305" key="8"/>
<evidence type="ECO:0007829" key="9">
    <source>
        <dbReference type="PDB" id="2ZJR"/>
    </source>
</evidence>
<evidence type="ECO:0007829" key="10">
    <source>
        <dbReference type="PDB" id="4IO9"/>
    </source>
</evidence>
<evidence type="ECO:0007829" key="11">
    <source>
        <dbReference type="PDB" id="5DM6"/>
    </source>
</evidence>
<evidence type="ECO:0007829" key="12">
    <source>
        <dbReference type="PDB" id="5DM7"/>
    </source>
</evidence>